<comment type="function">
    <text evidence="1">Modifies, by uridylylation and deuridylylation, the PII regulatory proteins (GlnB and homologs), in response to the nitrogen status of the cell that GlnD senses through the glutamine level. Under low glutamine levels, catalyzes the conversion of the PII proteins and UTP to PII-UMP and PPi, while under higher glutamine levels, GlnD hydrolyzes PII-UMP to PII and UMP (deuridylylation). Thus, controls uridylylation state and activity of the PII proteins, and plays an important role in the regulation of nitrogen assimilation and metabolism.</text>
</comment>
<comment type="catalytic activity">
    <reaction evidence="1">
        <text>[protein-PII]-L-tyrosine + UTP = [protein-PII]-uridylyl-L-tyrosine + diphosphate</text>
        <dbReference type="Rhea" id="RHEA:13673"/>
        <dbReference type="Rhea" id="RHEA-COMP:12147"/>
        <dbReference type="Rhea" id="RHEA-COMP:12148"/>
        <dbReference type="ChEBI" id="CHEBI:33019"/>
        <dbReference type="ChEBI" id="CHEBI:46398"/>
        <dbReference type="ChEBI" id="CHEBI:46858"/>
        <dbReference type="ChEBI" id="CHEBI:90602"/>
        <dbReference type="EC" id="2.7.7.59"/>
    </reaction>
</comment>
<comment type="catalytic activity">
    <reaction evidence="1">
        <text>[protein-PII]-uridylyl-L-tyrosine + H2O = [protein-PII]-L-tyrosine + UMP + H(+)</text>
        <dbReference type="Rhea" id="RHEA:48600"/>
        <dbReference type="Rhea" id="RHEA-COMP:12147"/>
        <dbReference type="Rhea" id="RHEA-COMP:12148"/>
        <dbReference type="ChEBI" id="CHEBI:15377"/>
        <dbReference type="ChEBI" id="CHEBI:15378"/>
        <dbReference type="ChEBI" id="CHEBI:46858"/>
        <dbReference type="ChEBI" id="CHEBI:57865"/>
        <dbReference type="ChEBI" id="CHEBI:90602"/>
    </reaction>
</comment>
<comment type="cofactor">
    <cofactor evidence="1">
        <name>Mg(2+)</name>
        <dbReference type="ChEBI" id="CHEBI:18420"/>
    </cofactor>
</comment>
<comment type="activity regulation">
    <text evidence="1">Uridylyltransferase (UTase) activity is inhibited by glutamine, while glutamine activates uridylyl-removing (UR) activity.</text>
</comment>
<comment type="domain">
    <text evidence="1">Has four distinct domains: an N-terminal nucleotidyltransferase (NT) domain responsible for UTase activity, a central HD domain that encodes UR activity, and two C-terminal ACT domains that seem to have a role in glutamine sensing.</text>
</comment>
<comment type="similarity">
    <text evidence="1">Belongs to the GlnD family.</text>
</comment>
<feature type="chain" id="PRO_1000114764" description="Bifunctional uridylyltransferase/uridylyl-removing enzyme">
    <location>
        <begin position="1"/>
        <end position="890"/>
    </location>
</feature>
<feature type="domain" description="HD" evidence="2">
    <location>
        <begin position="468"/>
        <end position="590"/>
    </location>
</feature>
<feature type="domain" description="ACT 1" evidence="1">
    <location>
        <begin position="709"/>
        <end position="784"/>
    </location>
</feature>
<feature type="domain" description="ACT 2" evidence="1">
    <location>
        <begin position="816"/>
        <end position="890"/>
    </location>
</feature>
<feature type="region of interest" description="Uridylyltransferase">
    <location>
        <begin position="1"/>
        <end position="349"/>
    </location>
</feature>
<feature type="region of interest" description="Disordered" evidence="3">
    <location>
        <begin position="1"/>
        <end position="21"/>
    </location>
</feature>
<feature type="region of interest" description="Uridylyl-removing">
    <location>
        <begin position="350"/>
        <end position="708"/>
    </location>
</feature>
<organism>
    <name type="scientific">Salmonella newport (strain SL254)</name>
    <dbReference type="NCBI Taxonomy" id="423368"/>
    <lineage>
        <taxon>Bacteria</taxon>
        <taxon>Pseudomonadati</taxon>
        <taxon>Pseudomonadota</taxon>
        <taxon>Gammaproteobacteria</taxon>
        <taxon>Enterobacterales</taxon>
        <taxon>Enterobacteriaceae</taxon>
        <taxon>Salmonella</taxon>
    </lineage>
</organism>
<keyword id="KW-0378">Hydrolase</keyword>
<keyword id="KW-0460">Magnesium</keyword>
<keyword id="KW-0511">Multifunctional enzyme</keyword>
<keyword id="KW-0548">Nucleotidyltransferase</keyword>
<keyword id="KW-0677">Repeat</keyword>
<keyword id="KW-0808">Transferase</keyword>
<proteinExistence type="inferred from homology"/>
<reference key="1">
    <citation type="journal article" date="2011" name="J. Bacteriol.">
        <title>Comparative genomics of 28 Salmonella enterica isolates: evidence for CRISPR-mediated adaptive sublineage evolution.</title>
        <authorList>
            <person name="Fricke W.F."/>
            <person name="Mammel M.K."/>
            <person name="McDermott P.F."/>
            <person name="Tartera C."/>
            <person name="White D.G."/>
            <person name="Leclerc J.E."/>
            <person name="Ravel J."/>
            <person name="Cebula T.A."/>
        </authorList>
    </citation>
    <scope>NUCLEOTIDE SEQUENCE [LARGE SCALE GENOMIC DNA]</scope>
    <source>
        <strain>SL254</strain>
    </source>
</reference>
<dbReference type="EC" id="2.7.7.59" evidence="1"/>
<dbReference type="EC" id="3.1.4.-" evidence="1"/>
<dbReference type="EMBL" id="CP001113">
    <property type="protein sequence ID" value="ACF62472.1"/>
    <property type="molecule type" value="Genomic_DNA"/>
</dbReference>
<dbReference type="RefSeq" id="WP_001094520.1">
    <property type="nucleotide sequence ID" value="NZ_CCMR01000003.1"/>
</dbReference>
<dbReference type="SMR" id="B4SUZ6"/>
<dbReference type="KEGG" id="see:SNSL254_A0235"/>
<dbReference type="HOGENOM" id="CLU_012833_0_0_6"/>
<dbReference type="Proteomes" id="UP000008824">
    <property type="component" value="Chromosome"/>
</dbReference>
<dbReference type="GO" id="GO:0008773">
    <property type="term" value="F:[protein-PII] uridylyltransferase activity"/>
    <property type="evidence" value="ECO:0007669"/>
    <property type="project" value="UniProtKB-UniRule"/>
</dbReference>
<dbReference type="GO" id="GO:0008081">
    <property type="term" value="F:phosphoric diester hydrolase activity"/>
    <property type="evidence" value="ECO:0007669"/>
    <property type="project" value="UniProtKB-UniRule"/>
</dbReference>
<dbReference type="GO" id="GO:0006808">
    <property type="term" value="P:regulation of nitrogen utilization"/>
    <property type="evidence" value="ECO:0007669"/>
    <property type="project" value="UniProtKB-UniRule"/>
</dbReference>
<dbReference type="CDD" id="cd04899">
    <property type="entry name" value="ACT_ACR-UUR-like_2"/>
    <property type="match status" value="1"/>
</dbReference>
<dbReference type="CDD" id="cd04900">
    <property type="entry name" value="ACT_UUR-like_1"/>
    <property type="match status" value="1"/>
</dbReference>
<dbReference type="CDD" id="cd00077">
    <property type="entry name" value="HDc"/>
    <property type="match status" value="1"/>
</dbReference>
<dbReference type="CDD" id="cd05401">
    <property type="entry name" value="NT_GlnE_GlnD_like"/>
    <property type="match status" value="1"/>
</dbReference>
<dbReference type="FunFam" id="1.10.3210.10:FF:000005">
    <property type="entry name" value="Bifunctional uridylyltransferase/uridylyl-removing enzyme"/>
    <property type="match status" value="1"/>
</dbReference>
<dbReference type="Gene3D" id="1.10.3210.10">
    <property type="entry name" value="Hypothetical protein af1432"/>
    <property type="match status" value="1"/>
</dbReference>
<dbReference type="Gene3D" id="1.20.120.330">
    <property type="entry name" value="Nucleotidyltransferases domain 2"/>
    <property type="match status" value="1"/>
</dbReference>
<dbReference type="HAMAP" id="MF_00277">
    <property type="entry name" value="PII_uridylyl_transf"/>
    <property type="match status" value="1"/>
</dbReference>
<dbReference type="InterPro" id="IPR045865">
    <property type="entry name" value="ACT-like_dom_sf"/>
</dbReference>
<dbReference type="InterPro" id="IPR002912">
    <property type="entry name" value="ACT_dom"/>
</dbReference>
<dbReference type="InterPro" id="IPR003607">
    <property type="entry name" value="HD/PDEase_dom"/>
</dbReference>
<dbReference type="InterPro" id="IPR006674">
    <property type="entry name" value="HD_domain"/>
</dbReference>
<dbReference type="InterPro" id="IPR043519">
    <property type="entry name" value="NT_sf"/>
</dbReference>
<dbReference type="InterPro" id="IPR013546">
    <property type="entry name" value="PII_UdlTrfase/GS_AdlTrfase"/>
</dbReference>
<dbReference type="InterPro" id="IPR002934">
    <property type="entry name" value="Polymerase_NTP_transf_dom"/>
</dbReference>
<dbReference type="InterPro" id="IPR010043">
    <property type="entry name" value="UTase/UR"/>
</dbReference>
<dbReference type="NCBIfam" id="NF002487">
    <property type="entry name" value="PRK01759.1"/>
    <property type="match status" value="1"/>
</dbReference>
<dbReference type="NCBIfam" id="NF003448">
    <property type="entry name" value="PRK05007.1"/>
    <property type="match status" value="1"/>
</dbReference>
<dbReference type="NCBIfam" id="TIGR01693">
    <property type="entry name" value="UTase_glnD"/>
    <property type="match status" value="1"/>
</dbReference>
<dbReference type="PANTHER" id="PTHR47320">
    <property type="entry name" value="BIFUNCTIONAL URIDYLYLTRANSFERASE/URIDYLYL-REMOVING ENZYME"/>
    <property type="match status" value="1"/>
</dbReference>
<dbReference type="PANTHER" id="PTHR47320:SF1">
    <property type="entry name" value="BIFUNCTIONAL URIDYLYLTRANSFERASE_URIDYLYL-REMOVING ENZYME"/>
    <property type="match status" value="1"/>
</dbReference>
<dbReference type="Pfam" id="PF01842">
    <property type="entry name" value="ACT"/>
    <property type="match status" value="2"/>
</dbReference>
<dbReference type="Pfam" id="PF08335">
    <property type="entry name" value="GlnD_UR_UTase"/>
    <property type="match status" value="1"/>
</dbReference>
<dbReference type="Pfam" id="PF01966">
    <property type="entry name" value="HD"/>
    <property type="match status" value="1"/>
</dbReference>
<dbReference type="Pfam" id="PF01909">
    <property type="entry name" value="NTP_transf_2"/>
    <property type="match status" value="1"/>
</dbReference>
<dbReference type="PIRSF" id="PIRSF006288">
    <property type="entry name" value="PII_uridyltransf"/>
    <property type="match status" value="1"/>
</dbReference>
<dbReference type="SMART" id="SM00471">
    <property type="entry name" value="HDc"/>
    <property type="match status" value="1"/>
</dbReference>
<dbReference type="SUPFAM" id="SSF55021">
    <property type="entry name" value="ACT-like"/>
    <property type="match status" value="2"/>
</dbReference>
<dbReference type="SUPFAM" id="SSF109604">
    <property type="entry name" value="HD-domain/PDEase-like"/>
    <property type="match status" value="1"/>
</dbReference>
<dbReference type="SUPFAM" id="SSF81301">
    <property type="entry name" value="Nucleotidyltransferase"/>
    <property type="match status" value="1"/>
</dbReference>
<dbReference type="SUPFAM" id="SSF81593">
    <property type="entry name" value="Nucleotidyltransferase substrate binding subunit/domain"/>
    <property type="match status" value="1"/>
</dbReference>
<dbReference type="PROSITE" id="PS51671">
    <property type="entry name" value="ACT"/>
    <property type="match status" value="2"/>
</dbReference>
<dbReference type="PROSITE" id="PS51831">
    <property type="entry name" value="HD"/>
    <property type="match status" value="1"/>
</dbReference>
<accession>B4SUZ6</accession>
<sequence length="890" mass="102278">MNTLPEQHANTALPTLPDQPQNPGVWPRAELTVAGIKARIDIFQHWLGEAFDSGICAEQLIEARTEFIDQLLQRLWIEAGFGQIADLALVAVGGYGRGELHPLSDIDLLILSRKKLPDEQAQKVGELLTLLWDVKLDVGHSVRTLEECLLEGLSDLTVATNLIETRLLIGDVALFLALQKHIFSEGFWPSDKFYAAKVEEQNQRHQRYHGTSYNLEPDIKSSPGGLRDIHTLQWVARRHFGATSLDEMVGFGFLTPAERAELNECLHILWRIRFALHLVVSRYDNRLLFDRQLSVAQRLNYSGEGNDPVERMMKDYFRVTRRVSELNQMLLQLFDEAILALPADEKPRPVDDEFQLRGTLIDLRDDTLFIREPQAILRMFYMMVRNSAITGIYSTTLRHLRHARRHLSQPLCYIPEARTLFLSMLRHPGAVSRGLLPMHRHSVLWAYMPQWSHIVGQMQFDLFHAYTVDEHTIRVMLKLESFAKEETRQRHPLCVDLWPRLPHPELILIAALFHDIAKGRGGDHSVLGAQDVLTFAELHGLNSRETQLVAWLVRQHLLMSVTAQRRDIQDPEVIKQFAEEVQTETRLRFLVCLTVADICATNETLWNSWKQSLLRELYFATEKQLRRGMQNTPDMRERVRHHQLQALALLRMDNIDEAALHKIWTRCRANYFVRHSPNQLAWHARHLLQHDLRQPLVLLSPQATRGGTEIFIWSPDRPYLFAAVCAELDRRNLSVHDAQIFTTRDGMAMDTFIVLEPDGSPLAADRHEVIRTGLEQTITQRSWQPPQPRRQPAKLRHFTVETEVNFLPTHTDRKSFMELIALDQPGLLARVGQIFADLGISLHGARITTIGERVEDLFIIATADRRALNNVLQLEVQQRLTAALNPNDKG</sequence>
<protein>
    <recommendedName>
        <fullName evidence="1">Bifunctional uridylyltransferase/uridylyl-removing enzyme</fullName>
        <shortName evidence="1">UTase/UR</shortName>
    </recommendedName>
    <alternativeName>
        <fullName evidence="1">Bifunctional [protein-PII] modification enzyme</fullName>
    </alternativeName>
    <alternativeName>
        <fullName evidence="1">Bifunctional nitrogen sensor protein</fullName>
    </alternativeName>
    <domain>
        <recommendedName>
            <fullName evidence="1">[Protein-PII] uridylyltransferase</fullName>
            <shortName evidence="1">PII uridylyltransferase</shortName>
            <shortName evidence="1">UTase</shortName>
            <ecNumber evidence="1">2.7.7.59</ecNumber>
        </recommendedName>
    </domain>
    <domain>
        <recommendedName>
            <fullName evidence="1">[Protein-PII]-UMP uridylyl-removing enzyme</fullName>
            <shortName evidence="1">UR</shortName>
            <ecNumber evidence="1">3.1.4.-</ecNumber>
        </recommendedName>
    </domain>
</protein>
<name>GLND_SALNS</name>
<evidence type="ECO:0000255" key="1">
    <source>
        <dbReference type="HAMAP-Rule" id="MF_00277"/>
    </source>
</evidence>
<evidence type="ECO:0000255" key="2">
    <source>
        <dbReference type="PROSITE-ProRule" id="PRU01175"/>
    </source>
</evidence>
<evidence type="ECO:0000256" key="3">
    <source>
        <dbReference type="SAM" id="MobiDB-lite"/>
    </source>
</evidence>
<gene>
    <name evidence="1" type="primary">glnD</name>
    <name type="ordered locus">SNSL254_A0235</name>
</gene>